<proteinExistence type="inferred from homology"/>
<gene>
    <name evidence="2" type="primary">rplL</name>
    <name type="ordered locus">SCO4653</name>
    <name type="ORF">SCD82.25</name>
</gene>
<protein>
    <recommendedName>
        <fullName evidence="2">Large ribosomal subunit protein bL12</fullName>
    </recommendedName>
    <alternativeName>
        <fullName evidence="3">50S ribosomal protein L7/L12</fullName>
    </alternativeName>
</protein>
<reference key="1">
    <citation type="journal article" date="1994" name="Mol. Microbiol.">
        <title>Synthesis of ribosomal proteins during growth of Streptomyces coelicolor.</title>
        <authorList>
            <person name="Blanco G."/>
            <person name="Rodicio R."/>
            <person name="Puglia A.M."/>
            <person name="Mendez C."/>
            <person name="Thompson C.J."/>
            <person name="Salas J.A."/>
        </authorList>
    </citation>
    <scope>NUCLEOTIDE SEQUENCE [GENOMIC DNA]</scope>
    <source>
        <strain>A3(2) / NRRL B-16638</strain>
    </source>
</reference>
<reference key="2">
    <citation type="journal article" date="2002" name="Nature">
        <title>Complete genome sequence of the model actinomycete Streptomyces coelicolor A3(2).</title>
        <authorList>
            <person name="Bentley S.D."/>
            <person name="Chater K.F."/>
            <person name="Cerdeno-Tarraga A.-M."/>
            <person name="Challis G.L."/>
            <person name="Thomson N.R."/>
            <person name="James K.D."/>
            <person name="Harris D.E."/>
            <person name="Quail M.A."/>
            <person name="Kieser H."/>
            <person name="Harper D."/>
            <person name="Bateman A."/>
            <person name="Brown S."/>
            <person name="Chandra G."/>
            <person name="Chen C.W."/>
            <person name="Collins M."/>
            <person name="Cronin A."/>
            <person name="Fraser A."/>
            <person name="Goble A."/>
            <person name="Hidalgo J."/>
            <person name="Hornsby T."/>
            <person name="Howarth S."/>
            <person name="Huang C.-H."/>
            <person name="Kieser T."/>
            <person name="Larke L."/>
            <person name="Murphy L.D."/>
            <person name="Oliver K."/>
            <person name="O'Neil S."/>
            <person name="Rabbinowitsch E."/>
            <person name="Rajandream M.A."/>
            <person name="Rutherford K.M."/>
            <person name="Rutter S."/>
            <person name="Seeger K."/>
            <person name="Saunders D."/>
            <person name="Sharp S."/>
            <person name="Squares R."/>
            <person name="Squares S."/>
            <person name="Taylor K."/>
            <person name="Warren T."/>
            <person name="Wietzorrek A."/>
            <person name="Woodward J.R."/>
            <person name="Barrell B.G."/>
            <person name="Parkhill J."/>
            <person name="Hopwood D.A."/>
        </authorList>
    </citation>
    <scope>NUCLEOTIDE SEQUENCE [LARGE SCALE GENOMIC DNA]</scope>
    <source>
        <strain>ATCC BAA-471 / A3(2) / M145</strain>
    </source>
</reference>
<feature type="initiator methionine" description="Removed" evidence="1">
    <location>
        <position position="1"/>
    </location>
</feature>
<feature type="chain" id="PRO_0000157586" description="Large ribosomal subunit protein bL12">
    <location>
        <begin position="2"/>
        <end position="127"/>
    </location>
</feature>
<evidence type="ECO:0000250" key="1"/>
<evidence type="ECO:0000255" key="2">
    <source>
        <dbReference type="HAMAP-Rule" id="MF_00368"/>
    </source>
</evidence>
<evidence type="ECO:0000305" key="3"/>
<comment type="function">
    <text evidence="2">Forms part of the ribosomal stalk which helps the ribosome interact with GTP-bound translation factors. Is thus essential for accurate translation.</text>
</comment>
<comment type="subunit">
    <text evidence="2">Homodimer. Part of the ribosomal stalk of the 50S ribosomal subunit. Forms a multimeric L10(L12)X complex, where L10 forms an elongated spine to which 2 to 4 L12 dimers bind in a sequential fashion. Binds GTP-bound translation factors.</text>
</comment>
<comment type="similarity">
    <text evidence="2">Belongs to the bacterial ribosomal protein bL12 family.</text>
</comment>
<organism>
    <name type="scientific">Streptomyces coelicolor (strain ATCC BAA-471 / A3(2) / M145)</name>
    <dbReference type="NCBI Taxonomy" id="100226"/>
    <lineage>
        <taxon>Bacteria</taxon>
        <taxon>Bacillati</taxon>
        <taxon>Actinomycetota</taxon>
        <taxon>Actinomycetes</taxon>
        <taxon>Kitasatosporales</taxon>
        <taxon>Streptomycetaceae</taxon>
        <taxon>Streptomyces</taxon>
        <taxon>Streptomyces albidoflavus group</taxon>
    </lineage>
</organism>
<sequence length="127" mass="13209">MAKLSQDDLLAQFEEMTLIELSEFVKAFEEKFDVTAAAAVAVAGPAAPGAPVEAAAEQDEFDVILTGAGDKKIQVIKVVRELTSLGLKEAKDLVDGAPKPVLEKVAKDAAEKAAESLKGAGASVEVK</sequence>
<accession>P41102</accession>
<keyword id="KW-1185">Reference proteome</keyword>
<keyword id="KW-0687">Ribonucleoprotein</keyword>
<keyword id="KW-0689">Ribosomal protein</keyword>
<dbReference type="EMBL" id="L24552">
    <property type="protein sequence ID" value="AAC36897.1"/>
    <property type="molecule type" value="Genomic_DNA"/>
</dbReference>
<dbReference type="EMBL" id="AL939120">
    <property type="protein sequence ID" value="CAB77427.1"/>
    <property type="molecule type" value="Genomic_DNA"/>
</dbReference>
<dbReference type="PIR" id="S49537">
    <property type="entry name" value="S49537"/>
</dbReference>
<dbReference type="RefSeq" id="NP_628814.1">
    <property type="nucleotide sequence ID" value="NC_003888.3"/>
</dbReference>
<dbReference type="RefSeq" id="WP_003974310.1">
    <property type="nucleotide sequence ID" value="NZ_VNID01000028.1"/>
</dbReference>
<dbReference type="SMR" id="P41102"/>
<dbReference type="FunCoup" id="P41102">
    <property type="interactions" value="213"/>
</dbReference>
<dbReference type="STRING" id="100226.gene:17762302"/>
<dbReference type="PaxDb" id="100226-SCO4653"/>
<dbReference type="GeneID" id="96655994"/>
<dbReference type="KEGG" id="sco:SCO4653"/>
<dbReference type="PATRIC" id="fig|100226.15.peg.4724"/>
<dbReference type="eggNOG" id="COG0222">
    <property type="taxonomic scope" value="Bacteria"/>
</dbReference>
<dbReference type="HOGENOM" id="CLU_086499_3_0_11"/>
<dbReference type="InParanoid" id="P41102"/>
<dbReference type="OrthoDB" id="9811748at2"/>
<dbReference type="PhylomeDB" id="P41102"/>
<dbReference type="Proteomes" id="UP000001973">
    <property type="component" value="Chromosome"/>
</dbReference>
<dbReference type="GO" id="GO:0022625">
    <property type="term" value="C:cytosolic large ribosomal subunit"/>
    <property type="evidence" value="ECO:0000318"/>
    <property type="project" value="GO_Central"/>
</dbReference>
<dbReference type="GO" id="GO:0003729">
    <property type="term" value="F:mRNA binding"/>
    <property type="evidence" value="ECO:0000318"/>
    <property type="project" value="GO_Central"/>
</dbReference>
<dbReference type="GO" id="GO:0003735">
    <property type="term" value="F:structural constituent of ribosome"/>
    <property type="evidence" value="ECO:0000318"/>
    <property type="project" value="GO_Central"/>
</dbReference>
<dbReference type="GO" id="GO:0006412">
    <property type="term" value="P:translation"/>
    <property type="evidence" value="ECO:0000318"/>
    <property type="project" value="GO_Central"/>
</dbReference>
<dbReference type="CDD" id="cd00387">
    <property type="entry name" value="Ribosomal_L7_L12"/>
    <property type="match status" value="1"/>
</dbReference>
<dbReference type="FunFam" id="1.20.5.710:FF:000005">
    <property type="entry name" value="50S ribosomal protein L7/L12"/>
    <property type="match status" value="1"/>
</dbReference>
<dbReference type="FunFam" id="3.30.1390.10:FF:000001">
    <property type="entry name" value="50S ribosomal protein L7/L12"/>
    <property type="match status" value="1"/>
</dbReference>
<dbReference type="Gene3D" id="3.30.1390.10">
    <property type="match status" value="1"/>
</dbReference>
<dbReference type="Gene3D" id="1.20.5.710">
    <property type="entry name" value="Single helix bin"/>
    <property type="match status" value="1"/>
</dbReference>
<dbReference type="HAMAP" id="MF_00368">
    <property type="entry name" value="Ribosomal_bL12"/>
    <property type="match status" value="1"/>
</dbReference>
<dbReference type="InterPro" id="IPR000206">
    <property type="entry name" value="Ribosomal_bL12"/>
</dbReference>
<dbReference type="InterPro" id="IPR013823">
    <property type="entry name" value="Ribosomal_bL12_C"/>
</dbReference>
<dbReference type="InterPro" id="IPR014719">
    <property type="entry name" value="Ribosomal_bL12_C/ClpS-like"/>
</dbReference>
<dbReference type="InterPro" id="IPR008932">
    <property type="entry name" value="Ribosomal_bL12_oligo"/>
</dbReference>
<dbReference type="InterPro" id="IPR036235">
    <property type="entry name" value="Ribosomal_bL12_oligo_N_sf"/>
</dbReference>
<dbReference type="NCBIfam" id="TIGR00855">
    <property type="entry name" value="L12"/>
    <property type="match status" value="1"/>
</dbReference>
<dbReference type="PANTHER" id="PTHR45987">
    <property type="entry name" value="39S RIBOSOMAL PROTEIN L12"/>
    <property type="match status" value="1"/>
</dbReference>
<dbReference type="PANTHER" id="PTHR45987:SF4">
    <property type="entry name" value="LARGE RIBOSOMAL SUBUNIT PROTEIN BL12M"/>
    <property type="match status" value="1"/>
</dbReference>
<dbReference type="Pfam" id="PF00542">
    <property type="entry name" value="Ribosomal_L12"/>
    <property type="match status" value="1"/>
</dbReference>
<dbReference type="Pfam" id="PF16320">
    <property type="entry name" value="Ribosomal_L12_N"/>
    <property type="match status" value="1"/>
</dbReference>
<dbReference type="SUPFAM" id="SSF54736">
    <property type="entry name" value="ClpS-like"/>
    <property type="match status" value="1"/>
</dbReference>
<dbReference type="SUPFAM" id="SSF48300">
    <property type="entry name" value="Ribosomal protein L7/12, oligomerisation (N-terminal) domain"/>
    <property type="match status" value="1"/>
</dbReference>
<name>RL7_STRCO</name>